<protein>
    <recommendedName>
        <fullName evidence="4">Carbon disulfide hydrolase</fullName>
        <shortName evidence="4">CS(2) hydrolase</shortName>
        <ecNumber evidence="3">3.13.1.5</ecNumber>
    </recommendedName>
</protein>
<dbReference type="EC" id="3.13.1.5" evidence="3"/>
<dbReference type="EMBL" id="KC902815">
    <property type="protein sequence ID" value="AGQ48123.1"/>
    <property type="molecule type" value="Genomic_DNA"/>
</dbReference>
<dbReference type="SMR" id="S5FT07"/>
<dbReference type="BRENDA" id="3.13.1.5">
    <property type="organism ID" value="92"/>
</dbReference>
<dbReference type="UniPathway" id="UPA00140"/>
<dbReference type="GO" id="GO:0004089">
    <property type="term" value="F:carbonate dehydratase activity"/>
    <property type="evidence" value="ECO:0007669"/>
    <property type="project" value="InterPro"/>
</dbReference>
<dbReference type="GO" id="GO:0016787">
    <property type="term" value="F:hydrolase activity"/>
    <property type="evidence" value="ECO:0007669"/>
    <property type="project" value="UniProtKB-KW"/>
</dbReference>
<dbReference type="GO" id="GO:0008270">
    <property type="term" value="F:zinc ion binding"/>
    <property type="evidence" value="ECO:0007669"/>
    <property type="project" value="InterPro"/>
</dbReference>
<dbReference type="GO" id="GO:0070814">
    <property type="term" value="P:hydrogen sulfide biosynthetic process"/>
    <property type="evidence" value="ECO:0007669"/>
    <property type="project" value="UniProtKB-UniPathway"/>
</dbReference>
<dbReference type="CDD" id="cd03379">
    <property type="entry name" value="beta_CA_cladeD"/>
    <property type="match status" value="1"/>
</dbReference>
<dbReference type="Gene3D" id="3.40.1050.10">
    <property type="entry name" value="Carbonic anhydrase"/>
    <property type="match status" value="1"/>
</dbReference>
<dbReference type="InterPro" id="IPR001765">
    <property type="entry name" value="Carbonic_anhydrase"/>
</dbReference>
<dbReference type="InterPro" id="IPR036874">
    <property type="entry name" value="Carbonic_anhydrase_sf"/>
</dbReference>
<dbReference type="PANTHER" id="PTHR43175:SF3">
    <property type="entry name" value="CARBON DISULFIDE HYDROLASE"/>
    <property type="match status" value="1"/>
</dbReference>
<dbReference type="PANTHER" id="PTHR43175">
    <property type="entry name" value="CARBONIC ANHYDRASE"/>
    <property type="match status" value="1"/>
</dbReference>
<dbReference type="Pfam" id="PF00484">
    <property type="entry name" value="Pro_CA"/>
    <property type="match status" value="1"/>
</dbReference>
<dbReference type="SMART" id="SM00947">
    <property type="entry name" value="Pro_CA"/>
    <property type="match status" value="1"/>
</dbReference>
<dbReference type="SUPFAM" id="SSF53056">
    <property type="entry name" value="beta-carbonic anhydrase, cab"/>
    <property type="match status" value="1"/>
</dbReference>
<keyword id="KW-0378">Hydrolase</keyword>
<keyword id="KW-0479">Metal-binding</keyword>
<keyword id="KW-0862">Zinc</keyword>
<organism>
    <name type="scientific">Acidithiobacillus thiooxidans</name>
    <name type="common">Thiobacillus thiooxidans</name>
    <dbReference type="NCBI Taxonomy" id="930"/>
    <lineage>
        <taxon>Bacteria</taxon>
        <taxon>Pseudomonadati</taxon>
        <taxon>Pseudomonadota</taxon>
        <taxon>Acidithiobacillia</taxon>
        <taxon>Acidithiobacillales</taxon>
        <taxon>Acidithiobacillaceae</taxon>
        <taxon>Acidithiobacillus</taxon>
    </lineage>
</organism>
<accession>S5FT07</accession>
<reference key="1">
    <citation type="journal article" date="2013" name="J. Bacteriol.">
        <title>Bacterial CS2 hydrolases from Acidithiobacillus thiooxidans strains are homologous to the archaeal catenane CS2 hydrolase.</title>
        <authorList>
            <person name="Smeulders M.J."/>
            <person name="Pol A."/>
            <person name="Venselaar H."/>
            <person name="Barends T.R."/>
            <person name="Hermans J."/>
            <person name="Jetten M.S."/>
            <person name="Op den Camp H.J."/>
        </authorList>
    </citation>
    <scope>NUCLEOTIDE SEQUENCE [GENOMIC DNA]</scope>
    <scope>FUNCTION</scope>
    <scope>CATALYTIC ACTIVITY</scope>
    <scope>SUBSTRATE SPECIFICITY</scope>
    <scope>BIOPHYSICOCHEMICAL PROPERTIES</scope>
    <scope>SUBUNIT</scope>
    <scope>3D-STRUCTURE MODELING</scope>
    <scope>PATHWAY</scope>
    <source>
        <strain>S1p</strain>
    </source>
</reference>
<comment type="function">
    <text evidence="3">Catalyzes the conversion of carbon disulfide into hydrogen sulfide and carbon dioxide, with carbonyl sulfide as an intermediate. Likely plays a key role in sulfur metabolism that allows A.thiooxidans S1p to grow on carbon disulfide as the main carbon and energy source. Does not show carbonic anhydrase activity (hydration of CO(2) to carbonate).</text>
</comment>
<comment type="catalytic activity">
    <reaction evidence="3">
        <text>carbon disulfide + 2 H2O = 2 hydrogen sulfide + CO2 + 2 H(+)</text>
        <dbReference type="Rhea" id="RHEA:38143"/>
        <dbReference type="ChEBI" id="CHEBI:15377"/>
        <dbReference type="ChEBI" id="CHEBI:15378"/>
        <dbReference type="ChEBI" id="CHEBI:16526"/>
        <dbReference type="ChEBI" id="CHEBI:23012"/>
        <dbReference type="ChEBI" id="CHEBI:29919"/>
        <dbReference type="EC" id="3.13.1.5"/>
    </reaction>
</comment>
<comment type="cofactor">
    <cofactor evidence="1">
        <name>Zn(2+)</name>
        <dbReference type="ChEBI" id="CHEBI:29105"/>
    </cofactor>
    <text evidence="1">Binds 1 zinc ion per subunit.</text>
</comment>
<comment type="biophysicochemical properties">
    <kinetics>
        <KM evidence="3">93 uM for carbon disulfide</KM>
        <KM evidence="3">74 uM for carbonyl sulfide</KM>
        <Vmax evidence="3">32.0 nmol/min/ug enzyme towards hydrogen sulfide formation from carbon disulfide</Vmax>
        <Vmax evidence="3">34.0 nmol/min/ug enzyme towards hydrogen sulfide formation from carbonyl sulfide</Vmax>
        <text evidence="3">kcat is 780 sec(-1) with carbon disulfide as substrate. kcat is 814 sec(-1) with the intermediate carbonyl sulfide as substrate.</text>
    </kinetics>
</comment>
<comment type="pathway">
    <text evidence="3">Sulfur metabolism; hydrogen sulfide biosynthesis.</text>
</comment>
<comment type="subunit">
    <text evidence="3">Forms only homooctamers in solution.</text>
</comment>
<comment type="similarity">
    <text evidence="5">Belongs to the beta-class carbonic anhydrase family.</text>
</comment>
<name>CS2H1_ACITH</name>
<feature type="chain" id="PRO_0000444999" description="Carbon disulfide hydrolase">
    <location>
        <begin position="1"/>
        <end position="217"/>
    </location>
</feature>
<feature type="region of interest" description="Disordered" evidence="2">
    <location>
        <begin position="192"/>
        <end position="217"/>
    </location>
</feature>
<feature type="binding site" evidence="1">
    <location>
        <position position="39"/>
    </location>
    <ligand>
        <name>Zn(2+)</name>
        <dbReference type="ChEBI" id="CHEBI:29105"/>
    </ligand>
</feature>
<feature type="binding site" evidence="1">
    <location>
        <position position="98"/>
    </location>
    <ligand>
        <name>Zn(2+)</name>
        <dbReference type="ChEBI" id="CHEBI:29105"/>
    </ligand>
</feature>
<feature type="binding site" evidence="1">
    <location>
        <position position="101"/>
    </location>
    <ligand>
        <name>Zn(2+)</name>
        <dbReference type="ChEBI" id="CHEBI:29105"/>
    </ligand>
</feature>
<evidence type="ECO:0000250" key="1">
    <source>
        <dbReference type="UniProtKB" id="G0WXL9"/>
    </source>
</evidence>
<evidence type="ECO:0000256" key="2">
    <source>
        <dbReference type="SAM" id="MobiDB-lite"/>
    </source>
</evidence>
<evidence type="ECO:0000269" key="3">
    <source>
    </source>
</evidence>
<evidence type="ECO:0000303" key="4">
    <source>
    </source>
</evidence>
<evidence type="ECO:0000305" key="5"/>
<evidence type="ECO:0000312" key="6">
    <source>
        <dbReference type="EMBL" id="AGQ48123.1"/>
    </source>
</evidence>
<sequence>MSTLKEQLTAHVASYDHWAQRRRYGPDGHNNRSLWVLACMDERLPVDEALGIHVDTPAGGGDAHCFRNAGGIVTDDAIRSAMLTCNFFGTKEIVIVQHTQCGMLSGNANEMEKVLREKGMDTDNITLDPTLPELQLAKGAFAKWIGMMDDVDETCMKTINAFKNHPLIPKDIVVSGWVWEVENRRLRAPTLDKEKRARTDCTPTPYGVKGNQPPRWK</sequence>
<proteinExistence type="evidence at protein level"/>
<gene>
    <name evidence="6" type="primary">csh</name>
</gene>